<protein>
    <recommendedName>
        <fullName evidence="1">Glycine dehydrogenase (decarboxylating)</fullName>
        <ecNumber evidence="1">1.4.4.2</ecNumber>
    </recommendedName>
    <alternativeName>
        <fullName evidence="1">Glycine cleavage system P-protein</fullName>
    </alternativeName>
    <alternativeName>
        <fullName evidence="1">Glycine decarboxylase</fullName>
    </alternativeName>
    <alternativeName>
        <fullName evidence="1">Glycine dehydrogenase (aminomethyl-transferring)</fullName>
    </alternativeName>
</protein>
<evidence type="ECO:0000255" key="1">
    <source>
        <dbReference type="HAMAP-Rule" id="MF_00711"/>
    </source>
</evidence>
<dbReference type="EC" id="1.4.4.2" evidence="1"/>
<dbReference type="EMBL" id="CP001614">
    <property type="protein sequence ID" value="ACR13967.1"/>
    <property type="molecule type" value="Genomic_DNA"/>
</dbReference>
<dbReference type="RefSeq" id="WP_015820082.1">
    <property type="nucleotide sequence ID" value="NC_012997.1"/>
</dbReference>
<dbReference type="SMR" id="C5BNY8"/>
<dbReference type="STRING" id="377629.TERTU_0724"/>
<dbReference type="KEGG" id="ttu:TERTU_0724"/>
<dbReference type="eggNOG" id="COG0403">
    <property type="taxonomic scope" value="Bacteria"/>
</dbReference>
<dbReference type="eggNOG" id="COG1003">
    <property type="taxonomic scope" value="Bacteria"/>
</dbReference>
<dbReference type="HOGENOM" id="CLU_004620_1_1_6"/>
<dbReference type="OrthoDB" id="9801272at2"/>
<dbReference type="Proteomes" id="UP000009080">
    <property type="component" value="Chromosome"/>
</dbReference>
<dbReference type="GO" id="GO:0005829">
    <property type="term" value="C:cytosol"/>
    <property type="evidence" value="ECO:0007669"/>
    <property type="project" value="TreeGrafter"/>
</dbReference>
<dbReference type="GO" id="GO:0005960">
    <property type="term" value="C:glycine cleavage complex"/>
    <property type="evidence" value="ECO:0007669"/>
    <property type="project" value="TreeGrafter"/>
</dbReference>
<dbReference type="GO" id="GO:0016594">
    <property type="term" value="F:glycine binding"/>
    <property type="evidence" value="ECO:0007669"/>
    <property type="project" value="TreeGrafter"/>
</dbReference>
<dbReference type="GO" id="GO:0004375">
    <property type="term" value="F:glycine dehydrogenase (decarboxylating) activity"/>
    <property type="evidence" value="ECO:0007669"/>
    <property type="project" value="UniProtKB-EC"/>
</dbReference>
<dbReference type="GO" id="GO:0030170">
    <property type="term" value="F:pyridoxal phosphate binding"/>
    <property type="evidence" value="ECO:0007669"/>
    <property type="project" value="TreeGrafter"/>
</dbReference>
<dbReference type="GO" id="GO:0019464">
    <property type="term" value="P:glycine decarboxylation via glycine cleavage system"/>
    <property type="evidence" value="ECO:0007669"/>
    <property type="project" value="UniProtKB-UniRule"/>
</dbReference>
<dbReference type="CDD" id="cd00613">
    <property type="entry name" value="GDC-P"/>
    <property type="match status" value="2"/>
</dbReference>
<dbReference type="FunFam" id="3.40.640.10:FF:000005">
    <property type="entry name" value="Glycine dehydrogenase (decarboxylating), mitochondrial"/>
    <property type="match status" value="1"/>
</dbReference>
<dbReference type="FunFam" id="3.90.1150.10:FF:000007">
    <property type="entry name" value="Glycine dehydrogenase (decarboxylating), mitochondrial"/>
    <property type="match status" value="1"/>
</dbReference>
<dbReference type="FunFam" id="3.40.640.10:FF:000007">
    <property type="entry name" value="glycine dehydrogenase (Decarboxylating), mitochondrial"/>
    <property type="match status" value="1"/>
</dbReference>
<dbReference type="Gene3D" id="3.90.1150.10">
    <property type="entry name" value="Aspartate Aminotransferase, domain 1"/>
    <property type="match status" value="2"/>
</dbReference>
<dbReference type="Gene3D" id="3.40.640.10">
    <property type="entry name" value="Type I PLP-dependent aspartate aminotransferase-like (Major domain)"/>
    <property type="match status" value="2"/>
</dbReference>
<dbReference type="HAMAP" id="MF_00711">
    <property type="entry name" value="GcvP"/>
    <property type="match status" value="1"/>
</dbReference>
<dbReference type="InterPro" id="IPR003437">
    <property type="entry name" value="GcvP"/>
</dbReference>
<dbReference type="InterPro" id="IPR049316">
    <property type="entry name" value="GDC-P_C"/>
</dbReference>
<dbReference type="InterPro" id="IPR049315">
    <property type="entry name" value="GDC-P_N"/>
</dbReference>
<dbReference type="InterPro" id="IPR020581">
    <property type="entry name" value="GDC_P"/>
</dbReference>
<dbReference type="InterPro" id="IPR015424">
    <property type="entry name" value="PyrdxlP-dep_Trfase"/>
</dbReference>
<dbReference type="InterPro" id="IPR015421">
    <property type="entry name" value="PyrdxlP-dep_Trfase_major"/>
</dbReference>
<dbReference type="InterPro" id="IPR015422">
    <property type="entry name" value="PyrdxlP-dep_Trfase_small"/>
</dbReference>
<dbReference type="NCBIfam" id="TIGR00461">
    <property type="entry name" value="gcvP"/>
    <property type="match status" value="1"/>
</dbReference>
<dbReference type="NCBIfam" id="NF003346">
    <property type="entry name" value="PRK04366.1"/>
    <property type="match status" value="1"/>
</dbReference>
<dbReference type="PANTHER" id="PTHR11773:SF13">
    <property type="entry name" value="GLYCINE DEHYDROGENASE (DECARBOXYLATING)"/>
    <property type="match status" value="1"/>
</dbReference>
<dbReference type="PANTHER" id="PTHR11773">
    <property type="entry name" value="GLYCINE DEHYDROGENASE, DECARBOXYLATING"/>
    <property type="match status" value="1"/>
</dbReference>
<dbReference type="Pfam" id="PF21478">
    <property type="entry name" value="GcvP2_C"/>
    <property type="match status" value="1"/>
</dbReference>
<dbReference type="Pfam" id="PF02347">
    <property type="entry name" value="GDC-P"/>
    <property type="match status" value="2"/>
</dbReference>
<dbReference type="SUPFAM" id="SSF53383">
    <property type="entry name" value="PLP-dependent transferases"/>
    <property type="match status" value="2"/>
</dbReference>
<name>GCSP_TERTT</name>
<reference key="1">
    <citation type="journal article" date="2009" name="PLoS ONE">
        <title>The complete genome of Teredinibacter turnerae T7901: an intracellular endosymbiont of marine wood-boring bivalves (shipworms).</title>
        <authorList>
            <person name="Yang J.C."/>
            <person name="Madupu R."/>
            <person name="Durkin A.S."/>
            <person name="Ekborg N.A."/>
            <person name="Pedamallu C.S."/>
            <person name="Hostetler J.B."/>
            <person name="Radune D."/>
            <person name="Toms B.S."/>
            <person name="Henrissat B."/>
            <person name="Coutinho P.M."/>
            <person name="Schwarz S."/>
            <person name="Field L."/>
            <person name="Trindade-Silva A.E."/>
            <person name="Soares C.A.G."/>
            <person name="Elshahawi S."/>
            <person name="Hanora A."/>
            <person name="Schmidt E.W."/>
            <person name="Haygood M.G."/>
            <person name="Posfai J."/>
            <person name="Benner J."/>
            <person name="Madinger C."/>
            <person name="Nove J."/>
            <person name="Anton B."/>
            <person name="Chaudhary K."/>
            <person name="Foster J."/>
            <person name="Holman A."/>
            <person name="Kumar S."/>
            <person name="Lessard P.A."/>
            <person name="Luyten Y.A."/>
            <person name="Slatko B."/>
            <person name="Wood N."/>
            <person name="Wu B."/>
            <person name="Teplitski M."/>
            <person name="Mougous J.D."/>
            <person name="Ward N."/>
            <person name="Eisen J.A."/>
            <person name="Badger J.H."/>
            <person name="Distel D.L."/>
        </authorList>
    </citation>
    <scope>NUCLEOTIDE SEQUENCE [LARGE SCALE GENOMIC DNA]</scope>
    <source>
        <strain>ATCC 39867 / T7901</strain>
    </source>
</reference>
<accession>C5BNY8</accession>
<proteinExistence type="inferred from homology"/>
<sequence>MPNTDSLNNLFASDEFISRHIGPDQNQVEKMLATLEVDSLDALIEKTVPATIREAQPLPLAEPVAEHTALEELKSLAAKNDVFTSYIGLGYHPTRVPNVILRNVLENPGWYTAYTPYQPEIAQGRLEGLLNFQQMITDLTGMEMANASMLDEATAAAEAMAMAKRVGRKNSSNCFFIDKNCYPQTIAVMRTRAEHFGFDIIVDAPEKALAGEDYFGAILQYPGADGGIGDIESWIKTIQSKDALAIVAADIMSLVLLRSPGDMGADIVIGCNQRFGIPMGFGGPHAAFFAFKEKHKRSTPGRIIGVSVDSRGKQALRMAMQTREQHIRREKANSNICTSQVLLAVMSAFYAMYHGAEGVDRIARRIHILTKMLSEGLISLGYKLRHTTFFDTLCIEVGDQQKPLLDRAQHARINLCAMGSGALSISLSECTTLDDLTALIAVFAGGESPLDMPSLEAKAQQKAVLSENLLRDGRALQHEIFSQYHSETEMLRYLKRLESRDIALNHAMIPLGSCTMKLNATAEMIPVTWPEFGNMHPFAPISQAAGYAEMFNQLQHMLAACTGYDAISLQPNAGSQGEYAGLLTIKKYFEAKGEVRSICLIPQSAHGTNPASAQMASMKVVVVNCDDDGNVDIADLDAKIAQHGENIAAIMVTYPSTHGVFEENITQICDKIHAVGAQVYIDGANMNALVGIASPGHFGGDVSHLNLHKTFCIPHGGGGPGMGPIGVKDHLAPYLAAHPLQEIPGTVAANGTVSAAPWGSASILPISWMYIRMMGAKGMKMASEYAILNANYIAKRLKNHFPILYSGKHGFVAHECLLDLRPLKEASGVSEEDIAKRLMDFGFHAPTMSFPVAGTLMIEPTESENQFELDRFCDAMIQIREEIRKIEQGELPADDNPLVNAPHTLDDVCNSEWNRSYTRDQACRPLDYLKHHKVWPTVNRIDNVYGDRNLICSCPGVDDYR</sequence>
<gene>
    <name evidence="1" type="primary">gcvP</name>
    <name type="ordered locus">TERTU_0724</name>
</gene>
<feature type="chain" id="PRO_1000212657" description="Glycine dehydrogenase (decarboxylating)">
    <location>
        <begin position="1"/>
        <end position="961"/>
    </location>
</feature>
<feature type="modified residue" description="N6-(pyridoxal phosphate)lysine" evidence="1">
    <location>
        <position position="709"/>
    </location>
</feature>
<keyword id="KW-0560">Oxidoreductase</keyword>
<keyword id="KW-0663">Pyridoxal phosphate</keyword>
<keyword id="KW-1185">Reference proteome</keyword>
<comment type="function">
    <text evidence="1">The glycine cleavage system catalyzes the degradation of glycine. The P protein binds the alpha-amino group of glycine through its pyridoxal phosphate cofactor; CO(2) is released and the remaining methylamine moiety is then transferred to the lipoamide cofactor of the H protein.</text>
</comment>
<comment type="catalytic activity">
    <reaction evidence="1">
        <text>N(6)-[(R)-lipoyl]-L-lysyl-[glycine-cleavage complex H protein] + glycine + H(+) = N(6)-[(R)-S(8)-aminomethyldihydrolipoyl]-L-lysyl-[glycine-cleavage complex H protein] + CO2</text>
        <dbReference type="Rhea" id="RHEA:24304"/>
        <dbReference type="Rhea" id="RHEA-COMP:10494"/>
        <dbReference type="Rhea" id="RHEA-COMP:10495"/>
        <dbReference type="ChEBI" id="CHEBI:15378"/>
        <dbReference type="ChEBI" id="CHEBI:16526"/>
        <dbReference type="ChEBI" id="CHEBI:57305"/>
        <dbReference type="ChEBI" id="CHEBI:83099"/>
        <dbReference type="ChEBI" id="CHEBI:83143"/>
        <dbReference type="EC" id="1.4.4.2"/>
    </reaction>
</comment>
<comment type="cofactor">
    <cofactor evidence="1">
        <name>pyridoxal 5'-phosphate</name>
        <dbReference type="ChEBI" id="CHEBI:597326"/>
    </cofactor>
</comment>
<comment type="subunit">
    <text evidence="1">The glycine cleavage system is composed of four proteins: P, T, L and H.</text>
</comment>
<comment type="similarity">
    <text evidence="1">Belongs to the GcvP family.</text>
</comment>
<organism>
    <name type="scientific">Teredinibacter turnerae (strain ATCC 39867 / T7901)</name>
    <dbReference type="NCBI Taxonomy" id="377629"/>
    <lineage>
        <taxon>Bacteria</taxon>
        <taxon>Pseudomonadati</taxon>
        <taxon>Pseudomonadota</taxon>
        <taxon>Gammaproteobacteria</taxon>
        <taxon>Cellvibrionales</taxon>
        <taxon>Cellvibrionaceae</taxon>
        <taxon>Teredinibacter</taxon>
    </lineage>
</organism>